<gene>
    <name type="primary">ALPL</name>
</gene>
<name>PPBT_BOVIN</name>
<organism>
    <name type="scientific">Bos taurus</name>
    <name type="common">Bovine</name>
    <dbReference type="NCBI Taxonomy" id="9913"/>
    <lineage>
        <taxon>Eukaryota</taxon>
        <taxon>Metazoa</taxon>
        <taxon>Chordata</taxon>
        <taxon>Craniata</taxon>
        <taxon>Vertebrata</taxon>
        <taxon>Euteleostomi</taxon>
        <taxon>Mammalia</taxon>
        <taxon>Eutheria</taxon>
        <taxon>Laurasiatheria</taxon>
        <taxon>Artiodactyla</taxon>
        <taxon>Ruminantia</taxon>
        <taxon>Pecora</taxon>
        <taxon>Bovidae</taxon>
        <taxon>Bovinae</taxon>
        <taxon>Bos</taxon>
    </lineage>
</organism>
<comment type="function">
    <text evidence="1 3 6">Alkaline phosphatase that metabolizes various phosphate compounds and plays a key role in skeletal mineralization and adaptive thermogenesis (By similarity). Has broad substrate specificity and can hydrolyze a considerable variety of compounds: however, only a few substrates, such as diphosphate (inorganic pyrophosphate; PPi), pyridoxal 5'-phosphate (PLP) and N-phosphocreatine are natural substrates (By similarity). Plays an essential role in skeletal and dental mineralization via its ability to hydrolyze extracellular diphosphate, a potent mineralization inhibitor, to phosphate: it thereby promotes hydroxyapatite crystal formation and increases inorganic phosphate concentration (PubMed:19098289). Acts in a non-redundant manner with PHOSPHO1 in skeletal mineralization: while PHOSPHO1 mediates the initiation of hydroxyapatite crystallization in the matrix vesicles (MVs), ALPL/TNAP catalyzes the spread of hydroxyapatite crystallization in the extracellular matrix (By similarity). Also promotes dephosphorylation of osteopontin (SSP1), an inhibitor of hydroxyapatite crystallization in its phosphorylated state; it is however unclear whether ALPL/TNAP mediates SSP1 dephosphorylation via a direct or indirect manner (By similarity). Catalyzes dephosphorylation of PLP to pyridoxal (PL), the transportable form of vitamin B6, in order to provide a sufficient amount of PLP in the brain, an essential cofactor for enzymes catalyzing the synthesis of diverse neurotransmitters (By similarity). Additionally, also able to mediate ATP degradation in a stepwise manner to adenosine, thereby regulating the availability of ligands for purinergic receptors (By similarity). Also capable of dephosphorylating microbial products, such as lipopolysaccharides (LPS) as well as other phosphorylated small-molecules, such as poly-inosine:cytosine (poly I:C) (By similarity). Acts as a key regulator of adaptive thermogenesis as part of the futile creatine cycle: localizes to the mitochondria of thermogenic fat cells and acts by mediating hydrolysis of N-phosphocreatine to initiate a futile cycle of creatine dephosphorylation and phosphorylation (By similarity). During the futile creatine cycle, creatine and N-phosphocreatine are in a futile cycle, which dissipates the high energy charge of N-phosphocreatine as heat without performing any mechanical or chemical work (By similarity).</text>
</comment>
<comment type="catalytic activity">
    <reaction evidence="3 5">
        <text>a phosphate monoester + H2O = an alcohol + phosphate</text>
        <dbReference type="Rhea" id="RHEA:15017"/>
        <dbReference type="ChEBI" id="CHEBI:15377"/>
        <dbReference type="ChEBI" id="CHEBI:30879"/>
        <dbReference type="ChEBI" id="CHEBI:43474"/>
        <dbReference type="ChEBI" id="CHEBI:67140"/>
        <dbReference type="EC" id="3.1.3.1"/>
    </reaction>
    <physiologicalReaction direction="left-to-right" evidence="3">
        <dbReference type="Rhea" id="RHEA:15018"/>
    </physiologicalReaction>
</comment>
<comment type="catalytic activity">
    <reaction evidence="3">
        <text>diphosphate + H2O = 2 phosphate + H(+)</text>
        <dbReference type="Rhea" id="RHEA:24576"/>
        <dbReference type="ChEBI" id="CHEBI:15377"/>
        <dbReference type="ChEBI" id="CHEBI:15378"/>
        <dbReference type="ChEBI" id="CHEBI:33019"/>
        <dbReference type="ChEBI" id="CHEBI:43474"/>
    </reaction>
    <physiologicalReaction direction="left-to-right" evidence="3">
        <dbReference type="Rhea" id="RHEA:24577"/>
    </physiologicalReaction>
</comment>
<comment type="catalytic activity">
    <reaction evidence="1">
        <text>pyridoxal 5'-phosphate + H2O = pyridoxal + phosphate</text>
        <dbReference type="Rhea" id="RHEA:20533"/>
        <dbReference type="ChEBI" id="CHEBI:15377"/>
        <dbReference type="ChEBI" id="CHEBI:17310"/>
        <dbReference type="ChEBI" id="CHEBI:43474"/>
        <dbReference type="ChEBI" id="CHEBI:597326"/>
    </reaction>
    <physiologicalReaction direction="left-to-right" evidence="1">
        <dbReference type="Rhea" id="RHEA:20534"/>
    </physiologicalReaction>
</comment>
<comment type="catalytic activity">
    <reaction evidence="1">
        <text>phosphoethanolamine + H2O = ethanolamine + phosphate</text>
        <dbReference type="Rhea" id="RHEA:16089"/>
        <dbReference type="ChEBI" id="CHEBI:15377"/>
        <dbReference type="ChEBI" id="CHEBI:43474"/>
        <dbReference type="ChEBI" id="CHEBI:57603"/>
        <dbReference type="ChEBI" id="CHEBI:58190"/>
    </reaction>
    <physiologicalReaction direction="left-to-right" evidence="1">
        <dbReference type="Rhea" id="RHEA:16090"/>
    </physiologicalReaction>
</comment>
<comment type="catalytic activity">
    <reaction evidence="3">
        <text>N-phosphocreatine + H2O = creatine + phosphate</text>
        <dbReference type="Rhea" id="RHEA:12977"/>
        <dbReference type="ChEBI" id="CHEBI:15377"/>
        <dbReference type="ChEBI" id="CHEBI:43474"/>
        <dbReference type="ChEBI" id="CHEBI:57947"/>
        <dbReference type="ChEBI" id="CHEBI:58092"/>
        <dbReference type="EC" id="3.9.1.1"/>
    </reaction>
    <physiologicalReaction direction="left-to-right" evidence="3">
        <dbReference type="Rhea" id="RHEA:12978"/>
    </physiologicalReaction>
</comment>
<comment type="catalytic activity">
    <reaction evidence="3">
        <text>ATP + H2O = ADP + phosphate + H(+)</text>
        <dbReference type="Rhea" id="RHEA:13065"/>
        <dbReference type="ChEBI" id="CHEBI:15377"/>
        <dbReference type="ChEBI" id="CHEBI:15378"/>
        <dbReference type="ChEBI" id="CHEBI:30616"/>
        <dbReference type="ChEBI" id="CHEBI:43474"/>
        <dbReference type="ChEBI" id="CHEBI:456216"/>
    </reaction>
    <physiologicalReaction direction="left-to-right" evidence="3">
        <dbReference type="Rhea" id="RHEA:13066"/>
    </physiologicalReaction>
</comment>
<comment type="catalytic activity">
    <reaction evidence="3">
        <text>ADP + H2O = AMP + phosphate + H(+)</text>
        <dbReference type="Rhea" id="RHEA:61436"/>
        <dbReference type="ChEBI" id="CHEBI:15377"/>
        <dbReference type="ChEBI" id="CHEBI:15378"/>
        <dbReference type="ChEBI" id="CHEBI:43474"/>
        <dbReference type="ChEBI" id="CHEBI:456215"/>
        <dbReference type="ChEBI" id="CHEBI:456216"/>
    </reaction>
    <physiologicalReaction direction="left-to-right" evidence="3">
        <dbReference type="Rhea" id="RHEA:61437"/>
    </physiologicalReaction>
</comment>
<comment type="catalytic activity">
    <reaction evidence="3">
        <text>AMP + H2O = adenosine + phosphate</text>
        <dbReference type="Rhea" id="RHEA:29375"/>
        <dbReference type="ChEBI" id="CHEBI:15377"/>
        <dbReference type="ChEBI" id="CHEBI:16335"/>
        <dbReference type="ChEBI" id="CHEBI:43474"/>
        <dbReference type="ChEBI" id="CHEBI:456215"/>
    </reaction>
    <physiologicalReaction direction="left-to-right" evidence="3">
        <dbReference type="Rhea" id="RHEA:29376"/>
    </physiologicalReaction>
</comment>
<comment type="cofactor">
    <cofactor evidence="2">
        <name>Mg(2+)</name>
        <dbReference type="ChEBI" id="CHEBI:18420"/>
    </cofactor>
    <text evidence="2">Binds 1 Mg(2+) ion.</text>
</comment>
<comment type="cofactor">
    <cofactor evidence="2">
        <name>Zn(2+)</name>
        <dbReference type="ChEBI" id="CHEBI:29105"/>
    </cofactor>
    <text evidence="2">Binds 2 Zn(2+) ions.</text>
</comment>
<comment type="cofactor">
    <cofactor evidence="1">
        <name>Ca(2+)</name>
        <dbReference type="ChEBI" id="CHEBI:29108"/>
    </cofactor>
</comment>
<comment type="activity regulation">
    <text evidence="3">Phosphatase activity is specifically inhibited by 5-((5-chloro-2-methoxyphenyl)sulfonamido)nicotinamide (SBI-425).</text>
</comment>
<comment type="subunit">
    <text evidence="1">Homodimer.</text>
</comment>
<comment type="subcellular location">
    <subcellularLocation>
        <location evidence="1">Cell membrane</location>
        <topology evidence="1">Lipid-anchor</topology>
        <topology evidence="1">GPI-anchor</topology>
    </subcellularLocation>
    <subcellularLocation>
        <location evidence="3">Extracellular vesicle membrane</location>
        <topology evidence="3">Lipid-anchor</topology>
        <topology evidence="3">GPI-anchor</topology>
    </subcellularLocation>
    <subcellularLocation>
        <location evidence="3">Mitochondrion membrane</location>
        <topology evidence="3">Lipid-anchor</topology>
        <topology evidence="3">GPI-anchor</topology>
    </subcellularLocation>
    <subcellularLocation>
        <location evidence="3">Mitochondrion intermembrane space</location>
    </subcellularLocation>
    <text evidence="3">Localizes to special class of extracellular vesicles, named matrix vesicles (MVs), which are released by osteogenic cells. Localizes to the mitochondria of thermogenic fat cells: tethered to mitochondrial membranes via a GPI-anchor and probably resides in the mitochondrion intermembrane space.</text>
</comment>
<comment type="domain">
    <text evidence="1">Calcium-binding is structural and does not influence the alkaline phosphatase activity. At very high concentrations, calcium can however substitute for zinc at zinc-binding sites, leading to strongly reduced enzyme activity.</text>
</comment>
<comment type="PTM">
    <text evidence="1">N-glycosylated.</text>
</comment>
<comment type="similarity">
    <text evidence="9">Belongs to the alkaline phosphatase family.</text>
</comment>
<sequence length="524" mass="57193">MISPFLLLAIGTCFASSLVPEKEKDPKYWRDQAQQTLKNALRLQTLNTNVAKNVIMFLGDGMGVSTVTAARILKGQLHHSPGEETKLEMDKFPYVALSKTYNTNAQVPDSAGTATAYLCGVKANEGTVGVSAATQRSQCNTTQGNEVTSILRWAKDAGKSVGIVTTTRVNHATPSASYAHSADRDWYSDNEMPPEALSQGCKDIAYQLMHNIKDIEVIMGGGRKYMFPKNRTDVEYELDEKARGTRLDGLNLIDIWKSFKPKHKHSHYVWNRTDLLALDPHSVDYLLGLFEPGDMQYELNRNNATDPSLSEMVEMAIRILNKNPKGFFLLVEGGRIDHGHHEGKAKQALHEAVEMDQAIGQAGAMTSVEDTLTVVTADHSHVFTFGGYTPRGNSIFGLAPMVSDTDKKPFTAILYGNGPGYKVVGGERENVSMVDYAHNNYQAQSAVPLRHETHGGEDVAVFAKGPMAHLLHGVHEQNYIPHVMAYAACIGANRDHCASASSSGSPSPGPLLLLLALLPLGSLF</sequence>
<feature type="signal peptide" evidence="7">
    <location>
        <begin position="1"/>
        <end position="17"/>
    </location>
</feature>
<feature type="chain" id="PRO_0000024019" description="Alkaline phosphatase, tissue-nonspecific isozyme">
    <location>
        <begin position="18"/>
        <end position="499"/>
    </location>
</feature>
<feature type="propeptide" id="PRO_0000024020" description="Removed in mature form" evidence="4">
    <location>
        <begin position="500"/>
        <end position="524"/>
    </location>
</feature>
<feature type="active site" description="Phosphoserine intermediate" evidence="2 5">
    <location>
        <position position="110"/>
    </location>
</feature>
<feature type="binding site" evidence="2">
    <location>
        <position position="60"/>
    </location>
    <ligand>
        <name>Mg(2+)</name>
        <dbReference type="ChEBI" id="CHEBI:18420"/>
    </ligand>
</feature>
<feature type="binding site" evidence="2">
    <location>
        <position position="60"/>
    </location>
    <ligand>
        <name>Zn(2+)</name>
        <dbReference type="ChEBI" id="CHEBI:29105"/>
        <label>1</label>
    </ligand>
</feature>
<feature type="binding site" evidence="2">
    <location>
        <position position="110"/>
    </location>
    <ligand>
        <name>Zn(2+)</name>
        <dbReference type="ChEBI" id="CHEBI:29105"/>
        <label>1</label>
    </ligand>
</feature>
<feature type="binding site" evidence="2">
    <location>
        <position position="173"/>
    </location>
    <ligand>
        <name>Mg(2+)</name>
        <dbReference type="ChEBI" id="CHEBI:18420"/>
    </ligand>
</feature>
<feature type="binding site" evidence="1">
    <location>
        <position position="235"/>
    </location>
    <ligand>
        <name>Ca(2+)</name>
        <dbReference type="ChEBI" id="CHEBI:29108"/>
    </ligand>
</feature>
<feature type="binding site" evidence="1">
    <location>
        <position position="290"/>
    </location>
    <ligand>
        <name>Ca(2+)</name>
        <dbReference type="ChEBI" id="CHEBI:29108"/>
    </ligand>
</feature>
<feature type="binding site" evidence="1">
    <location>
        <position position="291"/>
    </location>
    <ligand>
        <name>Ca(2+)</name>
        <dbReference type="ChEBI" id="CHEBI:29108"/>
    </ligand>
</feature>
<feature type="binding site" evidence="1">
    <location>
        <position position="306"/>
    </location>
    <ligand>
        <name>Ca(2+)</name>
        <dbReference type="ChEBI" id="CHEBI:29108"/>
    </ligand>
</feature>
<feature type="binding site" evidence="2">
    <location>
        <position position="332"/>
    </location>
    <ligand>
        <name>Mg(2+)</name>
        <dbReference type="ChEBI" id="CHEBI:18420"/>
    </ligand>
</feature>
<feature type="binding site" evidence="2">
    <location>
        <position position="337"/>
    </location>
    <ligand>
        <name>Zn(2+)</name>
        <dbReference type="ChEBI" id="CHEBI:29105"/>
        <label>2</label>
    </ligand>
</feature>
<feature type="binding site" evidence="2">
    <location>
        <position position="341"/>
    </location>
    <ligand>
        <name>Zn(2+)</name>
        <dbReference type="ChEBI" id="CHEBI:29105"/>
        <label>2</label>
    </ligand>
</feature>
<feature type="binding site" evidence="2">
    <location>
        <position position="378"/>
    </location>
    <ligand>
        <name>Zn(2+)</name>
        <dbReference type="ChEBI" id="CHEBI:29105"/>
        <label>1</label>
    </ligand>
</feature>
<feature type="binding site" evidence="2">
    <location>
        <position position="379"/>
    </location>
    <ligand>
        <name>Zn(2+)</name>
        <dbReference type="ChEBI" id="CHEBI:29105"/>
        <label>1</label>
    </ligand>
</feature>
<feature type="binding site" evidence="2">
    <location>
        <position position="454"/>
    </location>
    <ligand>
        <name>Zn(2+)</name>
        <dbReference type="ChEBI" id="CHEBI:29105"/>
        <label>2</label>
    </ligand>
</feature>
<feature type="modified residue" description="Phosphoserine" evidence="3">
    <location>
        <position position="110"/>
    </location>
</feature>
<feature type="lipid moiety-binding region" description="GPI-anchor amidated serine" evidence="4">
    <location>
        <position position="499"/>
    </location>
</feature>
<feature type="glycosylation site" description="N-linked (GlcNAc...) asparagine" evidence="4">
    <location>
        <position position="140"/>
    </location>
</feature>
<feature type="glycosylation site" description="N-linked (GlcNAc...) asparagine" evidence="4">
    <location>
        <position position="230"/>
    </location>
</feature>
<feature type="glycosylation site" description="N-linked (GlcNAc...) asparagine" evidence="4">
    <location>
        <position position="271"/>
    </location>
</feature>
<feature type="glycosylation site" description="N-linked (GlcNAc...) asparagine" evidence="4">
    <location>
        <position position="303"/>
    </location>
</feature>
<feature type="glycosylation site" description="N-linked (GlcNAc...) asparagine" evidence="4">
    <location>
        <position position="430"/>
    </location>
</feature>
<feature type="disulfide bond" evidence="2">
    <location>
        <begin position="139"/>
        <end position="201"/>
    </location>
</feature>
<feature type="disulfide bond" evidence="2">
    <location>
        <begin position="489"/>
        <end position="497"/>
    </location>
</feature>
<feature type="sequence conflict" description="In Ref. 1; AAA30380." evidence="9" ref="1">
    <original>H</original>
    <variation>Y</variation>
    <location>
        <position position="210"/>
    </location>
</feature>
<feature type="sequence conflict" description="In Ref. 1; AAA30380." evidence="9" ref="1">
    <original>H</original>
    <variation>Q</variation>
    <location>
        <position position="475"/>
    </location>
</feature>
<accession>P09487</accession>
<accession>Q17QS5</accession>
<evidence type="ECO:0000250" key="1">
    <source>
        <dbReference type="UniProtKB" id="P05186"/>
    </source>
</evidence>
<evidence type="ECO:0000250" key="2">
    <source>
        <dbReference type="UniProtKB" id="P05187"/>
    </source>
</evidence>
<evidence type="ECO:0000250" key="3">
    <source>
        <dbReference type="UniProtKB" id="P09242"/>
    </source>
</evidence>
<evidence type="ECO:0000255" key="4"/>
<evidence type="ECO:0000255" key="5">
    <source>
        <dbReference type="PROSITE-ProRule" id="PRU10042"/>
    </source>
</evidence>
<evidence type="ECO:0000269" key="6">
    <source>
    </source>
</evidence>
<evidence type="ECO:0000269" key="7">
    <source>
    </source>
</evidence>
<evidence type="ECO:0000303" key="8">
    <source>
    </source>
</evidence>
<evidence type="ECO:0000305" key="9"/>
<keyword id="KW-0091">Biomineralization</keyword>
<keyword id="KW-0106">Calcium</keyword>
<keyword id="KW-1003">Cell membrane</keyword>
<keyword id="KW-0903">Direct protein sequencing</keyword>
<keyword id="KW-1015">Disulfide bond</keyword>
<keyword id="KW-0325">Glycoprotein</keyword>
<keyword id="KW-0336">GPI-anchor</keyword>
<keyword id="KW-0378">Hydrolase</keyword>
<keyword id="KW-0449">Lipoprotein</keyword>
<keyword id="KW-0460">Magnesium</keyword>
<keyword id="KW-0472">Membrane</keyword>
<keyword id="KW-0479">Metal-binding</keyword>
<keyword id="KW-0496">Mitochondrion</keyword>
<keyword id="KW-0597">Phosphoprotein</keyword>
<keyword id="KW-1185">Reference proteome</keyword>
<keyword id="KW-0732">Signal</keyword>
<keyword id="KW-0862">Zinc</keyword>
<proteinExistence type="evidence at protein level"/>
<reference key="1">
    <citation type="journal article" date="1987" name="Gene">
        <title>Cloning and sequencing of bovine kidney alkaline phosphatase cDNA.</title>
        <authorList>
            <person name="Garattini E."/>
            <person name="Hua J.-C."/>
            <person name="Udenfriend S."/>
        </authorList>
    </citation>
    <scope>NUCLEOTIDE SEQUENCE [MRNA]</scope>
</reference>
<reference key="2">
    <citation type="submission" date="2006-06" db="EMBL/GenBank/DDBJ databases">
        <authorList>
            <consortium name="NIH - Mammalian Gene Collection (MGC) project"/>
        </authorList>
    </citation>
    <scope>NUCLEOTIDE SEQUENCE [LARGE SCALE MRNA]</scope>
    <source>
        <strain>Hereford</strain>
        <tissue>Thalamus</tissue>
    </source>
</reference>
<reference key="3">
    <citation type="journal article" date="1986" name="Proc. Natl. Acad. Sci. U.S.A.">
        <title>Partial sequencing of human adult, human fetal, and bovine intestinal alkaline phosphatases: comparison with the human placental and liver isozymes.</title>
        <authorList>
            <person name="Hua J.-C."/>
            <person name="Berger J."/>
            <person name="Pan Y.C.E."/>
            <person name="Hulmes J.D."/>
            <person name="Udenfriend S."/>
        </authorList>
    </citation>
    <scope>PROTEIN SEQUENCE OF 18-50</scope>
</reference>
<reference key="4">
    <citation type="journal article" date="2009" name="J. Biol. Chem.">
        <title>Tissue-nonspecific alkaline phosphatase is required for the calcification of collagen in serum: a possible mechanism for biomineralization.</title>
        <authorList>
            <person name="Price P.A."/>
            <person name="Toroian D."/>
            <person name="Chan W.S."/>
        </authorList>
    </citation>
    <scope>FUNCTION</scope>
</reference>
<protein>
    <recommendedName>
        <fullName evidence="8">Alkaline phosphatase, tissue-nonspecific isozyme</fullName>
        <shortName>AP-TNAP</shortName>
        <shortName evidence="8">TNAP</shortName>
        <shortName>TNSALP</shortName>
        <ecNumber evidence="1">3.1.3.1</ecNumber>
    </recommendedName>
    <alternativeName>
        <fullName>Alkaline phosphatase liver/bone/kidney isozyme</fullName>
    </alternativeName>
    <alternativeName>
        <fullName evidence="9">Phosphoamidase</fullName>
    </alternativeName>
    <alternativeName>
        <fullName evidence="3">Phosphocreatine phosphatase</fullName>
        <ecNumber evidence="3">3.9.1.1</ecNumber>
    </alternativeName>
</protein>
<dbReference type="EC" id="3.1.3.1" evidence="1"/>
<dbReference type="EC" id="3.9.1.1" evidence="3"/>
<dbReference type="EMBL" id="M18443">
    <property type="protein sequence ID" value="AAA30380.1"/>
    <property type="molecule type" value="mRNA"/>
</dbReference>
<dbReference type="EMBL" id="BC118208">
    <property type="protein sequence ID" value="AAI18209.1"/>
    <property type="molecule type" value="mRNA"/>
</dbReference>
<dbReference type="PIR" id="A29600">
    <property type="entry name" value="A29600"/>
</dbReference>
<dbReference type="RefSeq" id="NP_789828.2">
    <property type="nucleotide sequence ID" value="NM_176858.2"/>
</dbReference>
<dbReference type="RefSeq" id="XP_024854001.1">
    <property type="nucleotide sequence ID" value="XM_024998233.2"/>
</dbReference>
<dbReference type="SMR" id="P09487"/>
<dbReference type="FunCoup" id="P09487">
    <property type="interactions" value="176"/>
</dbReference>
<dbReference type="STRING" id="9913.ENSBTAP00000067523"/>
<dbReference type="BindingDB" id="P09487"/>
<dbReference type="ChEMBL" id="CHEMBL2406894"/>
<dbReference type="DrugCentral" id="P09487"/>
<dbReference type="GlyCosmos" id="P09487">
    <property type="glycosylation" value="5 sites, No reported glycans"/>
</dbReference>
<dbReference type="GlyGen" id="P09487">
    <property type="glycosylation" value="5 sites"/>
</dbReference>
<dbReference type="PaxDb" id="9913-ENSBTAP00000011783"/>
<dbReference type="Ensembl" id="ENSBTAT00000011783.7">
    <property type="protein sequence ID" value="ENSBTAP00000011783.5"/>
    <property type="gene ID" value="ENSBTAG00000008951.7"/>
</dbReference>
<dbReference type="GeneID" id="280994"/>
<dbReference type="KEGG" id="bta:280994"/>
<dbReference type="CTD" id="249"/>
<dbReference type="VEuPathDB" id="HostDB:ENSBTAG00000008951"/>
<dbReference type="VGNC" id="VGNC:25850">
    <property type="gene designation" value="ALPL"/>
</dbReference>
<dbReference type="eggNOG" id="KOG4126">
    <property type="taxonomic scope" value="Eukaryota"/>
</dbReference>
<dbReference type="GeneTree" id="ENSGT00950000183063"/>
<dbReference type="HOGENOM" id="CLU_008539_4_0_1"/>
<dbReference type="InParanoid" id="P09487"/>
<dbReference type="OMA" id="YQLMHNV"/>
<dbReference type="OrthoDB" id="5818554at2759"/>
<dbReference type="TreeFam" id="TF323513"/>
<dbReference type="BRENDA" id="3.1.3.1">
    <property type="organism ID" value="908"/>
</dbReference>
<dbReference type="Reactome" id="R-BTA-163125">
    <property type="pathway name" value="Post-translational modification: synthesis of GPI-anchored proteins"/>
</dbReference>
<dbReference type="PRO" id="PR:P09487"/>
<dbReference type="Proteomes" id="UP000009136">
    <property type="component" value="Chromosome 2"/>
</dbReference>
<dbReference type="Bgee" id="ENSBTAG00000008951">
    <property type="expression patterns" value="Expressed in olfactory segment of nasal mucosa and 104 other cell types or tissues"/>
</dbReference>
<dbReference type="GO" id="GO:0065010">
    <property type="term" value="C:extracellular membrane-bounded organelle"/>
    <property type="evidence" value="ECO:0000314"/>
    <property type="project" value="AgBase"/>
</dbReference>
<dbReference type="GO" id="GO:0005758">
    <property type="term" value="C:mitochondrial intermembrane space"/>
    <property type="evidence" value="ECO:0000250"/>
    <property type="project" value="UniProtKB"/>
</dbReference>
<dbReference type="GO" id="GO:0031966">
    <property type="term" value="C:mitochondrial membrane"/>
    <property type="evidence" value="ECO:0000250"/>
    <property type="project" value="UniProtKB"/>
</dbReference>
<dbReference type="GO" id="GO:0005886">
    <property type="term" value="C:plasma membrane"/>
    <property type="evidence" value="ECO:0000318"/>
    <property type="project" value="GO_Central"/>
</dbReference>
<dbReference type="GO" id="GO:0098552">
    <property type="term" value="C:side of membrane"/>
    <property type="evidence" value="ECO:0007669"/>
    <property type="project" value="UniProtKB-KW"/>
</dbReference>
<dbReference type="GO" id="GO:0043262">
    <property type="term" value="F:ADP phosphatase activity"/>
    <property type="evidence" value="ECO:0007669"/>
    <property type="project" value="RHEA"/>
</dbReference>
<dbReference type="GO" id="GO:0004035">
    <property type="term" value="F:alkaline phosphatase activity"/>
    <property type="evidence" value="ECO:0000314"/>
    <property type="project" value="MGI"/>
</dbReference>
<dbReference type="GO" id="GO:0016887">
    <property type="term" value="F:ATP hydrolysis activity"/>
    <property type="evidence" value="ECO:0007669"/>
    <property type="project" value="RHEA"/>
</dbReference>
<dbReference type="GO" id="GO:0005509">
    <property type="term" value="F:calcium ion binding"/>
    <property type="evidence" value="ECO:0000250"/>
    <property type="project" value="UniProtKB"/>
</dbReference>
<dbReference type="GO" id="GO:0004427">
    <property type="term" value="F:inorganic diphosphate phosphatase activity"/>
    <property type="evidence" value="ECO:0007669"/>
    <property type="project" value="RHEA"/>
</dbReference>
<dbReference type="GO" id="GO:0050187">
    <property type="term" value="F:phosphoamidase activity"/>
    <property type="evidence" value="ECO:0000250"/>
    <property type="project" value="UniProtKB"/>
</dbReference>
<dbReference type="GO" id="GO:0052732">
    <property type="term" value="F:phosphoethanolamine phosphatase activity"/>
    <property type="evidence" value="ECO:0007669"/>
    <property type="project" value="RHEA"/>
</dbReference>
<dbReference type="GO" id="GO:0033883">
    <property type="term" value="F:pyridoxal phosphatase activity"/>
    <property type="evidence" value="ECO:0000250"/>
    <property type="project" value="UniProtKB"/>
</dbReference>
<dbReference type="GO" id="GO:0016462">
    <property type="term" value="F:pyrophosphatase activity"/>
    <property type="evidence" value="ECO:0000250"/>
    <property type="project" value="UniProtKB"/>
</dbReference>
<dbReference type="GO" id="GO:0031214">
    <property type="term" value="P:biomineral tissue development"/>
    <property type="evidence" value="ECO:0000314"/>
    <property type="project" value="AgBase"/>
</dbReference>
<dbReference type="GO" id="GO:0030282">
    <property type="term" value="P:bone mineralization"/>
    <property type="evidence" value="ECO:0000250"/>
    <property type="project" value="UniProtKB"/>
</dbReference>
<dbReference type="GO" id="GO:0120162">
    <property type="term" value="P:positive regulation of cold-induced thermogenesis"/>
    <property type="evidence" value="ECO:0000250"/>
    <property type="project" value="UniProtKB"/>
</dbReference>
<dbReference type="CDD" id="cd16012">
    <property type="entry name" value="ALP"/>
    <property type="match status" value="1"/>
</dbReference>
<dbReference type="FunFam" id="3.40.720.10:FF:000008">
    <property type="entry name" value="Alkaline phosphatase"/>
    <property type="match status" value="1"/>
</dbReference>
<dbReference type="Gene3D" id="3.40.720.10">
    <property type="entry name" value="Alkaline Phosphatase, subunit A"/>
    <property type="match status" value="1"/>
</dbReference>
<dbReference type="InterPro" id="IPR001952">
    <property type="entry name" value="Alkaline_phosphatase"/>
</dbReference>
<dbReference type="InterPro" id="IPR018299">
    <property type="entry name" value="Alkaline_phosphatase_AS"/>
</dbReference>
<dbReference type="InterPro" id="IPR017850">
    <property type="entry name" value="Alkaline_phosphatase_core_sf"/>
</dbReference>
<dbReference type="PANTHER" id="PTHR11596">
    <property type="entry name" value="ALKALINE PHOSPHATASE"/>
    <property type="match status" value="1"/>
</dbReference>
<dbReference type="PANTHER" id="PTHR11596:SF74">
    <property type="entry name" value="ALKALINE PHOSPHATASE, TISSUE-NONSPECIFIC ISOZYME"/>
    <property type="match status" value="1"/>
</dbReference>
<dbReference type="Pfam" id="PF00245">
    <property type="entry name" value="Alk_phosphatase"/>
    <property type="match status" value="1"/>
</dbReference>
<dbReference type="PRINTS" id="PR00113">
    <property type="entry name" value="ALKPHPHTASE"/>
</dbReference>
<dbReference type="SMART" id="SM00098">
    <property type="entry name" value="alkPPc"/>
    <property type="match status" value="1"/>
</dbReference>
<dbReference type="SUPFAM" id="SSF53649">
    <property type="entry name" value="Alkaline phosphatase-like"/>
    <property type="match status" value="1"/>
</dbReference>
<dbReference type="PROSITE" id="PS00123">
    <property type="entry name" value="ALKALINE_PHOSPHATASE"/>
    <property type="match status" value="1"/>
</dbReference>